<keyword id="KW-0007">Acetylation</keyword>
<keyword id="KW-0051">Antiviral defense</keyword>
<keyword id="KW-0963">Cytoplasm</keyword>
<keyword id="KW-0256">Endoplasmic reticulum</keyword>
<keyword id="KW-0342">GTP-binding</keyword>
<keyword id="KW-0391">Immunity</keyword>
<keyword id="KW-0399">Innate immunity</keyword>
<keyword id="KW-0472">Membrane</keyword>
<keyword id="KW-0547">Nucleotide-binding</keyword>
<keyword id="KW-1185">Reference proteome</keyword>
<keyword id="KW-0832">Ubl conjugation</keyword>
<reference key="1">
    <citation type="submission" date="2000-02" db="EMBL/GenBank/DDBJ databases">
        <authorList>
            <person name="Vice S.J."/>
            <person name="Gordy P.W."/>
            <person name="Bowen R.A."/>
        </authorList>
    </citation>
    <scope>NUCLEOTIDE SEQUENCE [MRNA]</scope>
    <source>
        <tissue>Spleen</tissue>
    </source>
</reference>
<reference key="2">
    <citation type="journal article" date="2005" name="J. Interferon Cytokine Res.">
        <title>Intracellular localization and antiviral property of canine Mx proteins.</title>
        <authorList>
            <person name="Nakamura T."/>
            <person name="Asano A."/>
            <person name="Okano S."/>
            <person name="Ko J.H."/>
            <person name="Kon Y."/>
            <person name="Watanabe T."/>
            <person name="Agui T."/>
        </authorList>
    </citation>
    <scope>NUCLEOTIDE SEQUENCE [MRNA]</scope>
    <scope>SUBCELLULAR LOCATION</scope>
</reference>
<reference key="3">
    <citation type="journal article" date="2007" name="Microbes Infect.">
        <title>The Mx GTPase family of interferon-induced antiviral proteins.</title>
        <authorList>
            <person name="Haller O."/>
            <person name="Stertz S."/>
            <person name="Kochs G."/>
        </authorList>
    </citation>
    <scope>REVIEW</scope>
    <scope>INDUCTION</scope>
</reference>
<evidence type="ECO:0000250" key="1"/>
<evidence type="ECO:0000250" key="2">
    <source>
        <dbReference type="UniProtKB" id="P20591"/>
    </source>
</evidence>
<evidence type="ECO:0000255" key="3"/>
<evidence type="ECO:0000255" key="4">
    <source>
        <dbReference type="PROSITE-ProRule" id="PRU00720"/>
    </source>
</evidence>
<evidence type="ECO:0000255" key="5">
    <source>
        <dbReference type="PROSITE-ProRule" id="PRU01055"/>
    </source>
</evidence>
<evidence type="ECO:0000256" key="6">
    <source>
        <dbReference type="SAM" id="MobiDB-lite"/>
    </source>
</evidence>
<evidence type="ECO:0000269" key="7">
    <source>
    </source>
</evidence>
<evidence type="ECO:0000269" key="8">
    <source>
    </source>
</evidence>
<comment type="function">
    <text evidence="1">Interferon-induced dynamin-like GTPase with antiviral activity.</text>
</comment>
<comment type="subunit">
    <text evidence="1">Homooligomer. Oligomerizes into multimeric filamentous or ring-like structures by virtue of its stalk domain. Oligomerization is critical for GTPase activity, protein stability, and recognition of viral target structures (By similarity). Interacts with TRPC1, TRPC3, TRPC4, TRPC5, TRPC6 and TRPC7 (By similarity). Interacts with HSPA5 (By similarity). Interacts with TUBB/TUBB5 (By similarity). Interacts with DDX39A and DDX39B (By similarity).</text>
</comment>
<comment type="subcellular location">
    <subcellularLocation>
        <location evidence="7">Cytoplasm</location>
    </subcellularLocation>
    <subcellularLocation>
        <location evidence="1">Endoplasmic reticulum membrane</location>
        <topology evidence="1">Peripheral membrane protein</topology>
        <orientation evidence="1">Cytoplasmic side</orientation>
    </subcellularLocation>
    <subcellularLocation>
        <location evidence="1">Cytoplasm</location>
        <location evidence="1">Perinuclear region</location>
    </subcellularLocation>
    <text evidence="1">Binds preferentially to negatively charged phospholipids.</text>
</comment>
<comment type="induction">
    <text evidence="8">By type I and type III interferons.</text>
</comment>
<comment type="domain">
    <text evidence="1">The C-terminal GTPase effector domain (GED) is involved in oligomerization and viral target recognition.</text>
</comment>
<comment type="domain">
    <text evidence="1">The middle domain mediates self-assembly and oligomerization.</text>
</comment>
<comment type="PTM">
    <text evidence="1">ISGylated.</text>
</comment>
<comment type="similarity">
    <text evidence="5">Belongs to the TRAFAC class dynamin-like GTPase superfamily. Dynamin/Fzo/YdjA family.</text>
</comment>
<proteinExistence type="evidence at transcript level"/>
<organism>
    <name type="scientific">Canis lupus familiaris</name>
    <name type="common">Dog</name>
    <name type="synonym">Canis familiaris</name>
    <dbReference type="NCBI Taxonomy" id="9615"/>
    <lineage>
        <taxon>Eukaryota</taxon>
        <taxon>Metazoa</taxon>
        <taxon>Chordata</taxon>
        <taxon>Craniata</taxon>
        <taxon>Vertebrata</taxon>
        <taxon>Euteleostomi</taxon>
        <taxon>Mammalia</taxon>
        <taxon>Eutheria</taxon>
        <taxon>Laurasiatheria</taxon>
        <taxon>Carnivora</taxon>
        <taxon>Caniformia</taxon>
        <taxon>Canidae</taxon>
        <taxon>Canis</taxon>
    </lineage>
</organism>
<gene>
    <name type="primary">MX1</name>
</gene>
<sequence>MVNSQGKITDSNPVPNHVLLNGLTDKAEKNQGIGNSLCSQYEEKVRPCIDLIDSLRALGVEQDLALPAIAVIGDQSSGKSSVLEALSGVALPRGSGIVTRCPLVLKLKKLINEDEWRGKVSYQDTEMEISDPSEVEVEINKAQDAIAGEGQGISHELISLEVSSPHVPDLTLIDLPGITRVAVGNQPADIGRQTKQLIRKYILKQETINLVVVPCNVDIATTEALSMAQEVDPDGDRTIGILTKPDLVDRGTEGKVVDVAQNLVCHLKKGYMIVKCRGQQDIQDQVSLAEALQKEKDFFEDHPHFRVLLEEGRATVPNLAEKLTSELITHICKTLPLLENQIKENHEKITEELQKYGSDVPEDEHEKMFFLIDKLNAFNQDISSLIQGEESVGEDESRLFTKIRNEFHKWSAVIEKKFQRGYKAIYKQMEKFENRYRGRELPGFVNYKTFEIIIKQQIKELEEPAVDMLHTITDMVQVAFGDISKANFDEFFNLYRTTKSKIEDIKFELEKEAEKSIRLHFQMEQIVYCQDHVYQRALQRVREKDSDEEKKKKTSSMSHDEVSSVNISLSEILEHLLAYRQEATNRISSHIPLIIQYFILQVYGQKLQNGMLQLLQDKDTYSWLLKERSDTSDKRKFLKERLARLAQARRRLAKFPG</sequence>
<name>MX1_CANLF</name>
<protein>
    <recommendedName>
        <fullName>Interferon-induced GTP-binding protein Mx1</fullName>
    </recommendedName>
    <alternativeName>
        <fullName>Myxoma resistance protein 1</fullName>
    </alternativeName>
    <alternativeName>
        <fullName>Myxovirus resistance protein 1</fullName>
    </alternativeName>
</protein>
<dbReference type="EMBL" id="AF239823">
    <property type="protein sequence ID" value="AAF44684.1"/>
    <property type="molecule type" value="mRNA"/>
</dbReference>
<dbReference type="RefSeq" id="NP_001003134.1">
    <property type="nucleotide sequence ID" value="NM_001003134.1"/>
</dbReference>
<dbReference type="RefSeq" id="XP_005638792.1">
    <property type="nucleotide sequence ID" value="XM_005638735.2"/>
</dbReference>
<dbReference type="RefSeq" id="XP_038299031.1">
    <property type="nucleotide sequence ID" value="XM_038443103.1"/>
</dbReference>
<dbReference type="SMR" id="Q9N0Y3"/>
<dbReference type="PaxDb" id="9612-ENSCAFP00000014941"/>
<dbReference type="Ensembl" id="ENSCAFT00000016155.5">
    <property type="protein sequence ID" value="ENSCAFP00000014941.3"/>
    <property type="gene ID" value="ENSCAFG00000010167.5"/>
</dbReference>
<dbReference type="Ensembl" id="ENSCAFT00030043120.1">
    <property type="protein sequence ID" value="ENSCAFP00030037636.1"/>
    <property type="gene ID" value="ENSCAFG00030023413.1"/>
</dbReference>
<dbReference type="Ensembl" id="ENSCAFT00040044953.1">
    <property type="protein sequence ID" value="ENSCAFP00040039278.1"/>
    <property type="gene ID" value="ENSCAFG00040024049.1"/>
</dbReference>
<dbReference type="Ensembl" id="ENSCAFT00845053414.1">
    <property type="protein sequence ID" value="ENSCAFP00845041963.1"/>
    <property type="gene ID" value="ENSCAFG00845030104.1"/>
</dbReference>
<dbReference type="GeneID" id="403745"/>
<dbReference type="KEGG" id="cfa:403745"/>
<dbReference type="CTD" id="4599"/>
<dbReference type="VEuPathDB" id="HostDB:ENSCAFG00845030104"/>
<dbReference type="VGNC" id="VGNC:43512">
    <property type="gene designation" value="MX2"/>
</dbReference>
<dbReference type="eggNOG" id="KOG0446">
    <property type="taxonomic scope" value="Eukaryota"/>
</dbReference>
<dbReference type="GeneTree" id="ENSGT00940000163266"/>
<dbReference type="HOGENOM" id="CLU_008964_8_0_1"/>
<dbReference type="OMA" id="EFHKWSA"/>
<dbReference type="OrthoDB" id="19392at33554"/>
<dbReference type="TreeFam" id="TF331484"/>
<dbReference type="Proteomes" id="UP000002254">
    <property type="component" value="Chromosome 31"/>
</dbReference>
<dbReference type="Proteomes" id="UP000694429">
    <property type="component" value="Chromosome 31"/>
</dbReference>
<dbReference type="Proteomes" id="UP000694542">
    <property type="component" value="Chromosome 31"/>
</dbReference>
<dbReference type="Proteomes" id="UP000805418">
    <property type="component" value="Chromosome 31"/>
</dbReference>
<dbReference type="Bgee" id="ENSCAFG00000010167">
    <property type="expression patterns" value="Expressed in adrenal cortex and 48 other cell types or tissues"/>
</dbReference>
<dbReference type="GO" id="GO:0005737">
    <property type="term" value="C:cytoplasm"/>
    <property type="evidence" value="ECO:0000314"/>
    <property type="project" value="UniProtKB"/>
</dbReference>
<dbReference type="GO" id="GO:0005789">
    <property type="term" value="C:endoplasmic reticulum membrane"/>
    <property type="evidence" value="ECO:0007669"/>
    <property type="project" value="UniProtKB-SubCell"/>
</dbReference>
<dbReference type="GO" id="GO:0070382">
    <property type="term" value="C:exocytic vesicle"/>
    <property type="evidence" value="ECO:0000314"/>
    <property type="project" value="CAFA"/>
</dbReference>
<dbReference type="GO" id="GO:0048471">
    <property type="term" value="C:perinuclear region of cytoplasm"/>
    <property type="evidence" value="ECO:0007669"/>
    <property type="project" value="UniProtKB-SubCell"/>
</dbReference>
<dbReference type="GO" id="GO:0005525">
    <property type="term" value="F:GTP binding"/>
    <property type="evidence" value="ECO:0007669"/>
    <property type="project" value="UniProtKB-KW"/>
</dbReference>
<dbReference type="GO" id="GO:0003924">
    <property type="term" value="F:GTPase activity"/>
    <property type="evidence" value="ECO:0007669"/>
    <property type="project" value="InterPro"/>
</dbReference>
<dbReference type="GO" id="GO:0051607">
    <property type="term" value="P:defense response to virus"/>
    <property type="evidence" value="ECO:0007669"/>
    <property type="project" value="UniProtKB-KW"/>
</dbReference>
<dbReference type="GO" id="GO:0045087">
    <property type="term" value="P:innate immune response"/>
    <property type="evidence" value="ECO:0007669"/>
    <property type="project" value="UniProtKB-KW"/>
</dbReference>
<dbReference type="CDD" id="cd08771">
    <property type="entry name" value="DLP_1"/>
    <property type="match status" value="1"/>
</dbReference>
<dbReference type="FunFam" id="1.20.120.1240:FF:000007">
    <property type="entry name" value="Interferon-induced GTP-binding protein Mx1"/>
    <property type="match status" value="1"/>
</dbReference>
<dbReference type="FunFam" id="3.40.50.300:FF:000621">
    <property type="entry name" value="Interferon-induced GTP-binding protein Mx1"/>
    <property type="match status" value="1"/>
</dbReference>
<dbReference type="Gene3D" id="1.20.120.1240">
    <property type="entry name" value="Dynamin, middle domain"/>
    <property type="match status" value="1"/>
</dbReference>
<dbReference type="Gene3D" id="3.40.50.300">
    <property type="entry name" value="P-loop containing nucleotide triphosphate hydrolases"/>
    <property type="match status" value="1"/>
</dbReference>
<dbReference type="InterPro" id="IPR022812">
    <property type="entry name" value="Dynamin"/>
</dbReference>
<dbReference type="InterPro" id="IPR001401">
    <property type="entry name" value="Dynamin_GTPase"/>
</dbReference>
<dbReference type="InterPro" id="IPR019762">
    <property type="entry name" value="Dynamin_GTPase_CS"/>
</dbReference>
<dbReference type="InterPro" id="IPR045063">
    <property type="entry name" value="Dynamin_N"/>
</dbReference>
<dbReference type="InterPro" id="IPR000375">
    <property type="entry name" value="Dynamin_stalk"/>
</dbReference>
<dbReference type="InterPro" id="IPR030381">
    <property type="entry name" value="G_DYNAMIN_dom"/>
</dbReference>
<dbReference type="InterPro" id="IPR003130">
    <property type="entry name" value="GED"/>
</dbReference>
<dbReference type="InterPro" id="IPR020850">
    <property type="entry name" value="GED_dom"/>
</dbReference>
<dbReference type="InterPro" id="IPR027417">
    <property type="entry name" value="P-loop_NTPase"/>
</dbReference>
<dbReference type="PANTHER" id="PTHR11566">
    <property type="entry name" value="DYNAMIN"/>
    <property type="match status" value="1"/>
</dbReference>
<dbReference type="PANTHER" id="PTHR11566:SF217">
    <property type="entry name" value="INTERFERON-INDUCED GTP-BINDING PROTEIN MX1"/>
    <property type="match status" value="1"/>
</dbReference>
<dbReference type="Pfam" id="PF01031">
    <property type="entry name" value="Dynamin_M"/>
    <property type="match status" value="1"/>
</dbReference>
<dbReference type="Pfam" id="PF00350">
    <property type="entry name" value="Dynamin_N"/>
    <property type="match status" value="1"/>
</dbReference>
<dbReference type="Pfam" id="PF02212">
    <property type="entry name" value="GED"/>
    <property type="match status" value="1"/>
</dbReference>
<dbReference type="PRINTS" id="PR00195">
    <property type="entry name" value="DYNAMIN"/>
</dbReference>
<dbReference type="SMART" id="SM00053">
    <property type="entry name" value="DYNc"/>
    <property type="match status" value="1"/>
</dbReference>
<dbReference type="SMART" id="SM00302">
    <property type="entry name" value="GED"/>
    <property type="match status" value="1"/>
</dbReference>
<dbReference type="SUPFAM" id="SSF52540">
    <property type="entry name" value="P-loop containing nucleoside triphosphate hydrolases"/>
    <property type="match status" value="1"/>
</dbReference>
<dbReference type="PROSITE" id="PS00410">
    <property type="entry name" value="G_DYNAMIN_1"/>
    <property type="match status" value="1"/>
</dbReference>
<dbReference type="PROSITE" id="PS51718">
    <property type="entry name" value="G_DYNAMIN_2"/>
    <property type="match status" value="1"/>
</dbReference>
<dbReference type="PROSITE" id="PS51388">
    <property type="entry name" value="GED"/>
    <property type="match status" value="1"/>
</dbReference>
<accession>Q9N0Y3</accession>
<feature type="chain" id="PRO_0000206591" description="Interferon-induced GTP-binding protein Mx1">
    <location>
        <begin position="1"/>
        <end position="657"/>
    </location>
</feature>
<feature type="domain" description="Dynamin-type G" evidence="5">
    <location>
        <begin position="63"/>
        <end position="336"/>
    </location>
</feature>
<feature type="domain" description="GED" evidence="4">
    <location>
        <begin position="569"/>
        <end position="657"/>
    </location>
</feature>
<feature type="region of interest" description="G1 motif" evidence="5">
    <location>
        <begin position="73"/>
        <end position="80"/>
    </location>
</feature>
<feature type="region of interest" description="G2 motif" evidence="5">
    <location>
        <begin position="98"/>
        <end position="100"/>
    </location>
</feature>
<feature type="region of interest" description="G3 motif" evidence="5">
    <location>
        <begin position="174"/>
        <end position="177"/>
    </location>
</feature>
<feature type="region of interest" description="G4 motif" evidence="5">
    <location>
        <begin position="243"/>
        <end position="246"/>
    </location>
</feature>
<feature type="region of interest" description="G5 motif" evidence="5">
    <location>
        <begin position="275"/>
        <end position="278"/>
    </location>
</feature>
<feature type="region of interest" description="Bundle signaling element (BSE)" evidence="1">
    <location>
        <begin position="337"/>
        <end position="362"/>
    </location>
</feature>
<feature type="region of interest" description="Middle domain" evidence="1">
    <location>
        <begin position="362"/>
        <end position="529"/>
    </location>
</feature>
<feature type="region of interest" description="Stalk" evidence="1">
    <location>
        <begin position="363"/>
        <end position="627"/>
    </location>
</feature>
<feature type="region of interest" description="Disordered" evidence="6">
    <location>
        <begin position="540"/>
        <end position="559"/>
    </location>
</feature>
<feature type="region of interest" description="Critical for lipid-binding" evidence="1">
    <location>
        <begin position="550"/>
        <end position="553"/>
    </location>
</feature>
<feature type="compositionally biased region" description="Basic and acidic residues" evidence="6">
    <location>
        <begin position="540"/>
        <end position="551"/>
    </location>
</feature>
<feature type="binding site" evidence="3">
    <location>
        <begin position="73"/>
        <end position="80"/>
    </location>
    <ligand>
        <name>GTP</name>
        <dbReference type="ChEBI" id="CHEBI:37565"/>
    </ligand>
</feature>
<feature type="binding site" evidence="3">
    <location>
        <begin position="174"/>
        <end position="178"/>
    </location>
    <ligand>
        <name>GTP</name>
        <dbReference type="ChEBI" id="CHEBI:37565"/>
    </ligand>
</feature>
<feature type="binding site" evidence="3">
    <location>
        <begin position="243"/>
        <end position="246"/>
    </location>
    <ligand>
        <name>GTP</name>
        <dbReference type="ChEBI" id="CHEBI:37565"/>
    </ligand>
</feature>
<feature type="modified residue" description="N-acetylmethionine" evidence="2">
    <location>
        <position position="1"/>
    </location>
</feature>